<gene>
    <name evidence="5" type="primary">PE13</name>
    <name evidence="5" type="ordered locus">Rv1195</name>
</gene>
<comment type="function">
    <text evidence="3">May play a pivotal role in the interaction between M.tuberculosis and host. Can enhance the survival within macrophages under stress conditions such as H(2)O(2), SDS and low pH. Increases the production of IL-6 and IL-1beta from macrophages, and decreases the secretion of suppressor of cytokine signaling 3 (SOCS-3). These changes probably involve the p38-ERK-NF-kappa-B signaling pathway. Also precipitates the macrophage death.</text>
</comment>
<comment type="subcellular location">
    <subcellularLocation>
        <location evidence="3">Secreted</location>
        <location evidence="3">Cell wall</location>
    </subcellularLocation>
</comment>
<comment type="induction">
    <text evidence="2 3">Expression is positively regulated by Rv0485 (PubMed:19651861). Induced by different stress conditions such as surface stress, oxidative stress and acidic pH stress (PubMed:27147522).</text>
</comment>
<comment type="similarity">
    <text evidence="4">Belongs to the mycobacterial PE family.</text>
</comment>
<reference key="1">
    <citation type="journal article" date="1998" name="Nature">
        <title>Deciphering the biology of Mycobacterium tuberculosis from the complete genome sequence.</title>
        <authorList>
            <person name="Cole S.T."/>
            <person name="Brosch R."/>
            <person name="Parkhill J."/>
            <person name="Garnier T."/>
            <person name="Churcher C.M."/>
            <person name="Harris D.E."/>
            <person name="Gordon S.V."/>
            <person name="Eiglmeier K."/>
            <person name="Gas S."/>
            <person name="Barry C.E. III"/>
            <person name="Tekaia F."/>
            <person name="Badcock K."/>
            <person name="Basham D."/>
            <person name="Brown D."/>
            <person name="Chillingworth T."/>
            <person name="Connor R."/>
            <person name="Davies R.M."/>
            <person name="Devlin K."/>
            <person name="Feltwell T."/>
            <person name="Gentles S."/>
            <person name="Hamlin N."/>
            <person name="Holroyd S."/>
            <person name="Hornsby T."/>
            <person name="Jagels K."/>
            <person name="Krogh A."/>
            <person name="McLean J."/>
            <person name="Moule S."/>
            <person name="Murphy L.D."/>
            <person name="Oliver S."/>
            <person name="Osborne J."/>
            <person name="Quail M.A."/>
            <person name="Rajandream M.A."/>
            <person name="Rogers J."/>
            <person name="Rutter S."/>
            <person name="Seeger K."/>
            <person name="Skelton S."/>
            <person name="Squares S."/>
            <person name="Squares R."/>
            <person name="Sulston J.E."/>
            <person name="Taylor K."/>
            <person name="Whitehead S."/>
            <person name="Barrell B.G."/>
        </authorList>
    </citation>
    <scope>NUCLEOTIDE SEQUENCE [LARGE SCALE GENOMIC DNA]</scope>
    <source>
        <strain>ATCC 25618 / H37Rv</strain>
    </source>
</reference>
<reference key="2">
    <citation type="journal article" date="2009" name="Infect. Immun.">
        <title>The transcriptional regulator Rv0485 modulates the expression of a pe and ppe gene pair and is required for Mycobacterium tuberculosis virulence.</title>
        <authorList>
            <person name="Goldstone R.M."/>
            <person name="Goonesekera S.D."/>
            <person name="Bloom B.R."/>
            <person name="Sampson S.L."/>
        </authorList>
    </citation>
    <scope>INDUCTION</scope>
    <source>
        <strain>H37Rv</strain>
    </source>
</reference>
<reference key="3">
    <citation type="journal article" date="2011" name="Mol. Cell. Proteomics">
        <title>Proteogenomic analysis of Mycobacterium tuberculosis by high resolution mass spectrometry.</title>
        <authorList>
            <person name="Kelkar D.S."/>
            <person name="Kumar D."/>
            <person name="Kumar P."/>
            <person name="Balakrishnan L."/>
            <person name="Muthusamy B."/>
            <person name="Yadav A.K."/>
            <person name="Shrivastava P."/>
            <person name="Marimuthu A."/>
            <person name="Anand S."/>
            <person name="Sundaram H."/>
            <person name="Kingsbury R."/>
            <person name="Harsha H.C."/>
            <person name="Nair B."/>
            <person name="Prasad T.S."/>
            <person name="Chauhan D.S."/>
            <person name="Katoch K."/>
            <person name="Katoch V.M."/>
            <person name="Kumar P."/>
            <person name="Chaerkady R."/>
            <person name="Ramachandran S."/>
            <person name="Dash D."/>
            <person name="Pandey A."/>
        </authorList>
    </citation>
    <scope>IDENTIFICATION BY MASS SPECTROMETRY [LARGE SCALE ANALYSIS]</scope>
    <source>
        <strain>ATCC 25618 / H37Rv</strain>
    </source>
</reference>
<reference key="4">
    <citation type="journal article" date="2016" name="Apoptosis">
        <title>Mycobacterium tuberculosis PE13 (Rv1195) manipulates the host cell fate via p38-ERK-NF-kappaB axis and apoptosis.</title>
        <authorList>
            <person name="Li H."/>
            <person name="Li Q."/>
            <person name="Yu Z."/>
            <person name="Zhou M."/>
            <person name="Xie J."/>
        </authorList>
    </citation>
    <scope>FUNCTION</scope>
    <scope>SUBCELLULAR LOCATION</scope>
    <scope>INDUCTION</scope>
</reference>
<name>PE13_MYCTU</name>
<dbReference type="EMBL" id="AL123456">
    <property type="protein sequence ID" value="CCP43951.1"/>
    <property type="molecule type" value="Genomic_DNA"/>
</dbReference>
<dbReference type="RefSeq" id="WP_003406222.1">
    <property type="nucleotide sequence ID" value="NZ_NVQJ01000025.1"/>
</dbReference>
<dbReference type="RefSeq" id="YP_177794.1">
    <property type="nucleotide sequence ID" value="NC_000962.3"/>
</dbReference>
<dbReference type="SMR" id="Q79FR3"/>
<dbReference type="STRING" id="83332.Rv1195"/>
<dbReference type="PaxDb" id="83332-Rv1195"/>
<dbReference type="GeneID" id="886044"/>
<dbReference type="KEGG" id="mtu:Rv1195"/>
<dbReference type="KEGG" id="mtv:RVBD_1195"/>
<dbReference type="PATRIC" id="fig|83332.111.peg.1336"/>
<dbReference type="TubercuList" id="Rv1195"/>
<dbReference type="eggNOG" id="COG0657">
    <property type="taxonomic scope" value="Bacteria"/>
</dbReference>
<dbReference type="HOGENOM" id="CLU_000167_16_11_11"/>
<dbReference type="InParanoid" id="Q79FR3"/>
<dbReference type="PhylomeDB" id="Q79FR3"/>
<dbReference type="Proteomes" id="UP000001584">
    <property type="component" value="Chromosome"/>
</dbReference>
<dbReference type="GO" id="GO:0005576">
    <property type="term" value="C:extracellular region"/>
    <property type="evidence" value="ECO:0007669"/>
    <property type="project" value="UniProtKB-KW"/>
</dbReference>
<dbReference type="Gene3D" id="1.10.287.850">
    <property type="entry name" value="HP0062-like domain"/>
    <property type="match status" value="1"/>
</dbReference>
<dbReference type="InterPro" id="IPR000084">
    <property type="entry name" value="PE-PGRS_N"/>
</dbReference>
<dbReference type="Pfam" id="PF00934">
    <property type="entry name" value="PE"/>
    <property type="match status" value="1"/>
</dbReference>
<dbReference type="SUPFAM" id="SSF140459">
    <property type="entry name" value="PE/PPE dimer-like"/>
    <property type="match status" value="1"/>
</dbReference>
<proteinExistence type="evidence at protein level"/>
<sequence length="99" mass="9616">MSFVMAYPEMLAAAADTLQSIGATTVASNAAAAAPTTGVVPPAADEVSALTAAHFAAHAAMYQSVSARAAAIHDQFVATLASSASSYAATEVANAAAAS</sequence>
<feature type="chain" id="PRO_5007710417" description="PE family protein PE13">
    <location>
        <begin position="1"/>
        <end position="99"/>
    </location>
</feature>
<feature type="domain" description="PE" evidence="1">
    <location>
        <begin position="1"/>
        <end position="93"/>
    </location>
</feature>
<evidence type="ECO:0000255" key="1"/>
<evidence type="ECO:0000269" key="2">
    <source>
    </source>
</evidence>
<evidence type="ECO:0000269" key="3">
    <source>
    </source>
</evidence>
<evidence type="ECO:0000305" key="4"/>
<evidence type="ECO:0000312" key="5">
    <source>
        <dbReference type="EMBL" id="CCP43951.1"/>
    </source>
</evidence>
<protein>
    <recommendedName>
        <fullName evidence="4">PE family protein PE13</fullName>
    </recommendedName>
</protein>
<keyword id="KW-0134">Cell wall</keyword>
<keyword id="KW-1185">Reference proteome</keyword>
<keyword id="KW-0964">Secreted</keyword>
<keyword id="KW-0843">Virulence</keyword>
<organism>
    <name type="scientific">Mycobacterium tuberculosis (strain ATCC 25618 / H37Rv)</name>
    <dbReference type="NCBI Taxonomy" id="83332"/>
    <lineage>
        <taxon>Bacteria</taxon>
        <taxon>Bacillati</taxon>
        <taxon>Actinomycetota</taxon>
        <taxon>Actinomycetes</taxon>
        <taxon>Mycobacteriales</taxon>
        <taxon>Mycobacteriaceae</taxon>
        <taxon>Mycobacterium</taxon>
        <taxon>Mycobacterium tuberculosis complex</taxon>
    </lineage>
</organism>
<accession>Q79FR3</accession>
<accession>I6XAW7</accession>
<accession>L0T5Y6</accession>